<feature type="initiator methionine" description="Removed" evidence="1">
    <location>
        <position position="1"/>
    </location>
</feature>
<feature type="chain" id="PRO_0000221341" description="Histone H3.2">
    <location>
        <begin position="2"/>
        <end position="41" status="greater than"/>
    </location>
</feature>
<feature type="region of interest" description="Disordered" evidence="2">
    <location>
        <begin position="1"/>
        <end position="41"/>
    </location>
</feature>
<feature type="non-terminal residue">
    <location>
        <position position="41"/>
    </location>
</feature>
<keyword id="KW-0158">Chromosome</keyword>
<keyword id="KW-0238">DNA-binding</keyword>
<keyword id="KW-0544">Nucleosome core</keyword>
<keyword id="KW-0539">Nucleus</keyword>
<accession>P69119</accession>
<accession>P17705</accession>
<name>H32_TETMI</name>
<reference key="1">
    <citation type="journal article" date="1990" name="Nucleic Acids Res.">
        <title>Characterization of the promoter region of Tetrahymena genes.</title>
        <authorList>
            <person name="Brunk C.F."/>
            <person name="Sadler L.A."/>
        </authorList>
    </citation>
    <scope>NUCLEOTIDE SEQUENCE [GENOMIC DNA]</scope>
</reference>
<reference key="2">
    <citation type="journal article" date="1990" name="J. Mol. Evol.">
        <title>Phylogenetic relationships among Tetrahymena species determined using the polymerase chain reaction.</title>
        <authorList>
            <person name="Brunk C.F."/>
            <person name="Kahn R.W."/>
            <person name="Sadler L.A."/>
        </authorList>
    </citation>
    <scope>NUCLEOTIDE SEQUENCE [GENOMIC DNA]</scope>
</reference>
<comment type="function">
    <text>Core component of nucleosome. Nucleosomes wrap and compact DNA into chromatin, limiting DNA accessibility to the cellular machineries which require DNA as a template. Histones thereby play a central role in transcription regulation, DNA repair, DNA replication and chromosomal stability. DNA accessibility is regulated via a complex set of post-translational modifications of histones, also called histone code, and nucleosome remodeling.</text>
</comment>
<comment type="subunit">
    <text>The nucleosome is a histone octamer containing two molecules each of H2A, H2B, H3 and H4 assembled in one H3-H4 heterotetramer and two H2A-H2B heterodimers. The octamer wraps approximately 147 bp of DNA.</text>
</comment>
<comment type="subcellular location">
    <subcellularLocation>
        <location evidence="1">Nucleus</location>
    </subcellularLocation>
    <subcellularLocation>
        <location evidence="1">Chromosome</location>
    </subcellularLocation>
</comment>
<comment type="similarity">
    <text evidence="3">Belongs to the histone H3 family.</text>
</comment>
<proteinExistence type="inferred from homology"/>
<sequence>MARTKQTARKSTGAKAPRKQLASKAARKSAPATGGIKKPHR</sequence>
<dbReference type="EMBL" id="X17136">
    <property type="protein sequence ID" value="CAA35006.1"/>
    <property type="molecule type" value="Genomic_DNA"/>
</dbReference>
<dbReference type="PIR" id="S10281">
    <property type="entry name" value="S10281"/>
</dbReference>
<dbReference type="GO" id="GO:0000786">
    <property type="term" value="C:nucleosome"/>
    <property type="evidence" value="ECO:0007669"/>
    <property type="project" value="UniProtKB-KW"/>
</dbReference>
<dbReference type="GO" id="GO:0005634">
    <property type="term" value="C:nucleus"/>
    <property type="evidence" value="ECO:0007669"/>
    <property type="project" value="UniProtKB-SubCell"/>
</dbReference>
<dbReference type="GO" id="GO:0003677">
    <property type="term" value="F:DNA binding"/>
    <property type="evidence" value="ECO:0007669"/>
    <property type="project" value="UniProtKB-KW"/>
</dbReference>
<dbReference type="GO" id="GO:0046982">
    <property type="term" value="F:protein heterodimerization activity"/>
    <property type="evidence" value="ECO:0007669"/>
    <property type="project" value="InterPro"/>
</dbReference>
<dbReference type="GO" id="GO:0030527">
    <property type="term" value="F:structural constituent of chromatin"/>
    <property type="evidence" value="ECO:0007669"/>
    <property type="project" value="InterPro"/>
</dbReference>
<dbReference type="Gene3D" id="1.10.20.10">
    <property type="entry name" value="Histone, subunit A"/>
    <property type="match status" value="1"/>
</dbReference>
<dbReference type="InterPro" id="IPR009072">
    <property type="entry name" value="Histone-fold"/>
</dbReference>
<dbReference type="InterPro" id="IPR000164">
    <property type="entry name" value="Histone_H3/CENP-A"/>
</dbReference>
<dbReference type="PANTHER" id="PTHR11426">
    <property type="entry name" value="HISTONE H3"/>
    <property type="match status" value="1"/>
</dbReference>
<dbReference type="PRINTS" id="PR00622">
    <property type="entry name" value="HISTONEH3"/>
</dbReference>
<dbReference type="SUPFAM" id="SSF47113">
    <property type="entry name" value="Histone-fold"/>
    <property type="match status" value="1"/>
</dbReference>
<dbReference type="PROSITE" id="PS00322">
    <property type="entry name" value="HISTONE_H3_1"/>
    <property type="match status" value="1"/>
</dbReference>
<evidence type="ECO:0000250" key="1"/>
<evidence type="ECO:0000256" key="2">
    <source>
        <dbReference type="SAM" id="MobiDB-lite"/>
    </source>
</evidence>
<evidence type="ECO:0000305" key="3"/>
<protein>
    <recommendedName>
        <fullName>Histone H3.2</fullName>
    </recommendedName>
</protein>
<organism>
    <name type="scientific">Tetrahymena mimbres</name>
    <dbReference type="NCBI Taxonomy" id="5902"/>
    <lineage>
        <taxon>Eukaryota</taxon>
        <taxon>Sar</taxon>
        <taxon>Alveolata</taxon>
        <taxon>Ciliophora</taxon>
        <taxon>Intramacronucleata</taxon>
        <taxon>Oligohymenophorea</taxon>
        <taxon>Hymenostomatida</taxon>
        <taxon>Tetrahymenina</taxon>
        <taxon>Tetrahymenidae</taxon>
        <taxon>Tetrahymena</taxon>
    </lineage>
</organism>